<sequence>MSVNLINIGFGNIVAGNRVIAVVSPESAPIKRIIQEARERGMLIDATYGRRTRAVIITDSDHVILSAIQPETVSHRLSGEDGNR</sequence>
<accession>B8CWR7</accession>
<reference key="1">
    <citation type="journal article" date="2009" name="PLoS ONE">
        <title>Genome analysis of the anaerobic thermohalophilic bacterium Halothermothrix orenii.</title>
        <authorList>
            <person name="Mavromatis K."/>
            <person name="Ivanova N."/>
            <person name="Anderson I."/>
            <person name="Lykidis A."/>
            <person name="Hooper S.D."/>
            <person name="Sun H."/>
            <person name="Kunin V."/>
            <person name="Lapidus A."/>
            <person name="Hugenholtz P."/>
            <person name="Patel B."/>
            <person name="Kyrpides N.C."/>
        </authorList>
    </citation>
    <scope>NUCLEOTIDE SEQUENCE [LARGE SCALE GENOMIC DNA]</scope>
    <source>
        <strain>H 168 / OCM 544 / DSM 9562</strain>
    </source>
</reference>
<comment type="similarity">
    <text evidence="1">Belongs to the RemA family.</text>
</comment>
<protein>
    <recommendedName>
        <fullName evidence="1">Putative regulatory protein Hore_09800</fullName>
    </recommendedName>
</protein>
<gene>
    <name type="ordered locus">Hore_09800</name>
</gene>
<feature type="chain" id="PRO_1000185020" description="Putative regulatory protein Hore_09800">
    <location>
        <begin position="1"/>
        <end position="84"/>
    </location>
</feature>
<name>Y9800_HALOH</name>
<keyword id="KW-1185">Reference proteome</keyword>
<evidence type="ECO:0000255" key="1">
    <source>
        <dbReference type="HAMAP-Rule" id="MF_01503"/>
    </source>
</evidence>
<dbReference type="EMBL" id="CP001098">
    <property type="protein sequence ID" value="ACL69736.1"/>
    <property type="molecule type" value="Genomic_DNA"/>
</dbReference>
<dbReference type="RefSeq" id="WP_012635922.1">
    <property type="nucleotide sequence ID" value="NC_011899.1"/>
</dbReference>
<dbReference type="SMR" id="B8CWR7"/>
<dbReference type="STRING" id="373903.Hore_09800"/>
<dbReference type="KEGG" id="hor:Hore_09800"/>
<dbReference type="eggNOG" id="COG2052">
    <property type="taxonomic scope" value="Bacteria"/>
</dbReference>
<dbReference type="HOGENOM" id="CLU_165326_0_0_9"/>
<dbReference type="OrthoDB" id="5432174at2"/>
<dbReference type="Proteomes" id="UP000000719">
    <property type="component" value="Chromosome"/>
</dbReference>
<dbReference type="HAMAP" id="MF_01503">
    <property type="entry name" value="RemA"/>
    <property type="match status" value="1"/>
</dbReference>
<dbReference type="InterPro" id="IPR007169">
    <property type="entry name" value="RemA-like"/>
</dbReference>
<dbReference type="NCBIfam" id="NF046064">
    <property type="entry name" value="MtxBflmRegRemA"/>
    <property type="match status" value="1"/>
</dbReference>
<dbReference type="NCBIfam" id="NF003315">
    <property type="entry name" value="PRK04323.1"/>
    <property type="match status" value="1"/>
</dbReference>
<dbReference type="PANTHER" id="PTHR38449:SF1">
    <property type="entry name" value="REGULATORY PROTEIN SSL2874-RELATED"/>
    <property type="match status" value="1"/>
</dbReference>
<dbReference type="PANTHER" id="PTHR38449">
    <property type="entry name" value="REGULATORY PROTEIN TM_1690-RELATED"/>
    <property type="match status" value="1"/>
</dbReference>
<dbReference type="Pfam" id="PF04025">
    <property type="entry name" value="RemA-like"/>
    <property type="match status" value="1"/>
</dbReference>
<proteinExistence type="inferred from homology"/>
<organism>
    <name type="scientific">Halothermothrix orenii (strain H 168 / OCM 544 / DSM 9562)</name>
    <dbReference type="NCBI Taxonomy" id="373903"/>
    <lineage>
        <taxon>Bacteria</taxon>
        <taxon>Bacillati</taxon>
        <taxon>Bacillota</taxon>
        <taxon>Clostridia</taxon>
        <taxon>Halanaerobiales</taxon>
        <taxon>Halothermotrichaceae</taxon>
        <taxon>Halothermothrix</taxon>
    </lineage>
</organism>